<sequence length="746" mass="85084">MRREFCWDAYSKAAGSRASSPLPRQDRDSFCHQMSFCLTELHLWSLKNTLHIADRDIGIYQYYDKKDPPATEHGNLEKKQKLAESRDYPWTLKNRRPEKLRDSLKELEELMQNSRCVLSKWKNKYVCQLLFGSGVLVSLSLSGPQLEKVVIDRSLVGKLISDTISDALLTDSFIILSFLAQNKLCFIQFTKKMESSDVNKRLEKLSALDYKIFYYEIPGPINKTTERHLAINCVHDRVVCWWPLVNDDAWPWAPISSEKDRANLLLLGYAQGRLEVLSSVRTEWDPLDVRFGTKQPYQVFTVEHSVSVDKEPMADSCIYECIRNKIQCVSVTRIPLKSKAISCCRNVTEDKLILGCEDSSLILYETHRRVTLLAQTELLPSLISCHPSGAILLVGSNQGELQIFDMALSPINIQLLAEDRLPRETLQFSKLFDASSSLVQMQWIAPQVVSQKGEGSDIYDLLFLRFERGPLGVLLFKLGVFTRGQLGLIDIIFQYIHCDEIYEAINILSSMNWDTLGHQCFISMSAIVNHLLRQKLTPEREAQLETSLGTFYAPTRPLLDSTILEYRDQISKYARRFFHHLLRYQRFEKAFLLAVDVGARDLFMDIHYLALDKGELALAEVARKRASDIDAESITSGVELLGPLDRGDMLNEAFIGLSLAPQGEDSFPDNLPPSCPTHRHILQQRILNGSSNRQIIDRRNELEKDICSGFLMTNTCNAEDGELREDGREQEIRDGGSLKMIHFGLV</sequence>
<keyword id="KW-0002">3D-structure</keyword>
<keyword id="KW-0025">Alternative splicing</keyword>
<keyword id="KW-0083">Bardet-Biedl syndrome</keyword>
<keyword id="KW-1003">Cell membrane</keyword>
<keyword id="KW-0966">Cell projection</keyword>
<keyword id="KW-1186">Ciliopathy</keyword>
<keyword id="KW-0969">Cilium</keyword>
<keyword id="KW-0970">Cilium biogenesis/degradation</keyword>
<keyword id="KW-0963">Cytoplasm</keyword>
<keyword id="KW-0206">Cytoskeleton</keyword>
<keyword id="KW-0225">Disease variant</keyword>
<keyword id="KW-0991">Intellectual disability</keyword>
<keyword id="KW-0472">Membrane</keyword>
<keyword id="KW-0550">Obesity</keyword>
<keyword id="KW-1267">Proteomics identification</keyword>
<keyword id="KW-1185">Reference proteome</keyword>
<keyword id="KW-0677">Repeat</keyword>
<keyword id="KW-0853">WD repeat</keyword>
<dbReference type="EMBL" id="AF131737">
    <property type="protein sequence ID" value="AAD20026.1"/>
    <property type="molecule type" value="mRNA"/>
</dbReference>
<dbReference type="EMBL" id="BX538331">
    <property type="protein sequence ID" value="CAD98100.1"/>
    <property type="molecule type" value="mRNA"/>
</dbReference>
<dbReference type="EMBL" id="AC079353">
    <property type="protein sequence ID" value="AAY24034.1"/>
    <property type="molecule type" value="Genomic_DNA"/>
</dbReference>
<dbReference type="EMBL" id="AC009501">
    <property type="status" value="NOT_ANNOTATED_CDS"/>
    <property type="molecule type" value="Genomic_DNA"/>
</dbReference>
<dbReference type="EMBL" id="AC067953">
    <property type="status" value="NOT_ANNOTATED_CDS"/>
    <property type="molecule type" value="Genomic_DNA"/>
</dbReference>
<dbReference type="EMBL" id="AC074367">
    <property type="status" value="NOT_ANNOTATED_CDS"/>
    <property type="molecule type" value="Genomic_DNA"/>
</dbReference>
<dbReference type="EMBL" id="BC093752">
    <property type="protein sequence ID" value="AAH93752.1"/>
    <property type="molecule type" value="mRNA"/>
</dbReference>
<dbReference type="EMBL" id="BC093754">
    <property type="protein sequence ID" value="AAH93754.1"/>
    <property type="molecule type" value="mRNA"/>
</dbReference>
<dbReference type="CCDS" id="CCDS42688.1">
    <molecule id="O95876-1"/>
</dbReference>
<dbReference type="CCDS" id="CCDS46301.1">
    <molecule id="O95876-3"/>
</dbReference>
<dbReference type="RefSeq" id="NP_001036157.1">
    <molecule id="O95876-3"/>
    <property type="nucleotide sequence ID" value="NM_001042692.3"/>
</dbReference>
<dbReference type="RefSeq" id="NP_056994.3">
    <molecule id="O95876-1"/>
    <property type="nucleotide sequence ID" value="NM_015910.7"/>
</dbReference>
<dbReference type="PDB" id="7Q3D">
    <property type="method" value="EM"/>
    <property type="resolution" value="3.35 A"/>
    <property type="chains" value="A=2-746"/>
</dbReference>
<dbReference type="PDBsum" id="7Q3D"/>
<dbReference type="EMDB" id="EMD-13789"/>
<dbReference type="SMR" id="O95876"/>
<dbReference type="BioGRID" id="119249">
    <property type="interactions" value="1"/>
</dbReference>
<dbReference type="ComplexPortal" id="CPX-5001">
    <property type="entry name" value="CPLANE complex"/>
</dbReference>
<dbReference type="FunCoup" id="O95876">
    <property type="interactions" value="285"/>
</dbReference>
<dbReference type="IntAct" id="O95876">
    <property type="interactions" value="1"/>
</dbReference>
<dbReference type="STRING" id="9606.ENSP00000272321"/>
<dbReference type="iPTMnet" id="O95876"/>
<dbReference type="PhosphoSitePlus" id="O95876"/>
<dbReference type="BioMuta" id="WDPCP"/>
<dbReference type="MassIVE" id="O95876"/>
<dbReference type="PaxDb" id="9606-ENSP00000272321"/>
<dbReference type="PeptideAtlas" id="O95876"/>
<dbReference type="Antibodypedia" id="47438">
    <property type="antibodies" value="105 antibodies from 20 providers"/>
</dbReference>
<dbReference type="DNASU" id="51057"/>
<dbReference type="Ensembl" id="ENST00000272321.12">
    <molecule id="O95876-1"/>
    <property type="protein sequence ID" value="ENSP00000272321.7"/>
    <property type="gene ID" value="ENSG00000143951.16"/>
</dbReference>
<dbReference type="Ensembl" id="ENST00000398544.7">
    <molecule id="O95876-3"/>
    <property type="protein sequence ID" value="ENSP00000381552.3"/>
    <property type="gene ID" value="ENSG00000143951.16"/>
</dbReference>
<dbReference type="Ensembl" id="ENST00000409562.7">
    <molecule id="O95876-2"/>
    <property type="protein sequence ID" value="ENSP00000387222.3"/>
    <property type="gene ID" value="ENSG00000143951.16"/>
</dbReference>
<dbReference type="GeneID" id="51057"/>
<dbReference type="KEGG" id="hsa:51057"/>
<dbReference type="MANE-Select" id="ENST00000272321.12">
    <property type="protein sequence ID" value="ENSP00000272321.7"/>
    <property type="RefSeq nucleotide sequence ID" value="NM_015910.7"/>
    <property type="RefSeq protein sequence ID" value="NP_056994.3"/>
</dbReference>
<dbReference type="UCSC" id="uc002scf.4">
    <molecule id="O95876-1"/>
    <property type="organism name" value="human"/>
</dbReference>
<dbReference type="AGR" id="HGNC:28027"/>
<dbReference type="CTD" id="51057"/>
<dbReference type="DisGeNET" id="51057"/>
<dbReference type="GeneCards" id="WDPCP"/>
<dbReference type="GeneReviews" id="WDPCP"/>
<dbReference type="HGNC" id="HGNC:28027">
    <property type="gene designation" value="WDPCP"/>
</dbReference>
<dbReference type="HPA" id="ENSG00000143951">
    <property type="expression patterns" value="Low tissue specificity"/>
</dbReference>
<dbReference type="MalaCards" id="WDPCP"/>
<dbReference type="MIM" id="217085">
    <property type="type" value="phenotype"/>
</dbReference>
<dbReference type="MIM" id="613580">
    <property type="type" value="gene"/>
</dbReference>
<dbReference type="MIM" id="615992">
    <property type="type" value="phenotype"/>
</dbReference>
<dbReference type="neXtProt" id="NX_O95876"/>
<dbReference type="OpenTargets" id="ENSG00000143951"/>
<dbReference type="Orphanet" id="110">
    <property type="disease" value="Bardet-Biedl syndrome"/>
</dbReference>
<dbReference type="Orphanet" id="1338">
    <property type="disease" value="Heart defect-tongue hamartoma-polysyndactyly syndrome"/>
</dbReference>
<dbReference type="PharmGKB" id="PA164717186"/>
<dbReference type="VEuPathDB" id="HostDB:ENSG00000143951"/>
<dbReference type="eggNOG" id="ENOG502QR8Y">
    <property type="taxonomic scope" value="Eukaryota"/>
</dbReference>
<dbReference type="GeneTree" id="ENSGT00390000016551"/>
<dbReference type="HOGENOM" id="CLU_004917_1_0_1"/>
<dbReference type="InParanoid" id="O95876"/>
<dbReference type="OMA" id="NSMNWNT"/>
<dbReference type="OrthoDB" id="10013020at2759"/>
<dbReference type="PAN-GO" id="O95876">
    <property type="GO annotations" value="4 GO annotations based on evolutionary models"/>
</dbReference>
<dbReference type="PhylomeDB" id="O95876"/>
<dbReference type="TreeFam" id="TF323483"/>
<dbReference type="PathwayCommons" id="O95876"/>
<dbReference type="SignaLink" id="O95876"/>
<dbReference type="BioGRID-ORCS" id="51057">
    <property type="hits" value="6 hits in 1150 CRISPR screens"/>
</dbReference>
<dbReference type="ChiTaRS" id="WDPCP">
    <property type="organism name" value="human"/>
</dbReference>
<dbReference type="GenomeRNAi" id="51057"/>
<dbReference type="Pharos" id="O95876">
    <property type="development level" value="Tbio"/>
</dbReference>
<dbReference type="PRO" id="PR:O95876"/>
<dbReference type="Proteomes" id="UP000005640">
    <property type="component" value="Chromosome 2"/>
</dbReference>
<dbReference type="RNAct" id="O95876">
    <property type="molecule type" value="protein"/>
</dbReference>
<dbReference type="Bgee" id="ENSG00000143951">
    <property type="expression patterns" value="Expressed in kidney epithelium and 198 other cell types or tissues"/>
</dbReference>
<dbReference type="ExpressionAtlas" id="O95876">
    <property type="expression patterns" value="baseline and differential"/>
</dbReference>
<dbReference type="GO" id="GO:0097541">
    <property type="term" value="C:axonemal basal plate"/>
    <property type="evidence" value="ECO:0000318"/>
    <property type="project" value="GO_Central"/>
</dbReference>
<dbReference type="GO" id="GO:0005930">
    <property type="term" value="C:axoneme"/>
    <property type="evidence" value="ECO:0000250"/>
    <property type="project" value="UniProtKB"/>
</dbReference>
<dbReference type="GO" id="GO:0005929">
    <property type="term" value="C:cilium"/>
    <property type="evidence" value="ECO:0000303"/>
    <property type="project" value="ComplexPortal"/>
</dbReference>
<dbReference type="GO" id="GO:0005886">
    <property type="term" value="C:plasma membrane"/>
    <property type="evidence" value="ECO:0007669"/>
    <property type="project" value="UniProtKB-SubCell"/>
</dbReference>
<dbReference type="GO" id="GO:0035091">
    <property type="term" value="F:phosphatidylinositol binding"/>
    <property type="evidence" value="ECO:0000250"/>
    <property type="project" value="UniProtKB"/>
</dbReference>
<dbReference type="GO" id="GO:0002093">
    <property type="term" value="P:auditory receptor cell morphogenesis"/>
    <property type="evidence" value="ECO:0007669"/>
    <property type="project" value="Ensembl"/>
</dbReference>
<dbReference type="GO" id="GO:0043010">
    <property type="term" value="P:camera-type eye development"/>
    <property type="evidence" value="ECO:0007669"/>
    <property type="project" value="Ensembl"/>
</dbReference>
<dbReference type="GO" id="GO:0060271">
    <property type="term" value="P:cilium assembly"/>
    <property type="evidence" value="ECO:0000250"/>
    <property type="project" value="UniProtKB"/>
</dbReference>
<dbReference type="GO" id="GO:0044782">
    <property type="term" value="P:cilium organization"/>
    <property type="evidence" value="ECO:0000318"/>
    <property type="project" value="GO_Central"/>
</dbReference>
<dbReference type="GO" id="GO:0072359">
    <property type="term" value="P:circulatory system development"/>
    <property type="evidence" value="ECO:0007669"/>
    <property type="project" value="Ensembl"/>
</dbReference>
<dbReference type="GO" id="GO:0055123">
    <property type="term" value="P:digestive system development"/>
    <property type="evidence" value="ECO:0007669"/>
    <property type="project" value="Ensembl"/>
</dbReference>
<dbReference type="GO" id="GO:0042733">
    <property type="term" value="P:embryonic digit morphogenesis"/>
    <property type="evidence" value="ECO:0000315"/>
    <property type="project" value="GO_Central"/>
</dbReference>
<dbReference type="GO" id="GO:0001736">
    <property type="term" value="P:establishment of planar polarity"/>
    <property type="evidence" value="ECO:0000303"/>
    <property type="project" value="ComplexPortal"/>
</dbReference>
<dbReference type="GO" id="GO:0045184">
    <property type="term" value="P:establishment of protein localization"/>
    <property type="evidence" value="ECO:0000318"/>
    <property type="project" value="GO_Central"/>
</dbReference>
<dbReference type="GO" id="GO:0042073">
    <property type="term" value="P:intraciliary transport"/>
    <property type="evidence" value="ECO:0000303"/>
    <property type="project" value="ComplexPortal"/>
</dbReference>
<dbReference type="GO" id="GO:0001822">
    <property type="term" value="P:kidney development"/>
    <property type="evidence" value="ECO:0007669"/>
    <property type="project" value="Ensembl"/>
</dbReference>
<dbReference type="GO" id="GO:0007399">
    <property type="term" value="P:nervous system development"/>
    <property type="evidence" value="ECO:0000318"/>
    <property type="project" value="GO_Central"/>
</dbReference>
<dbReference type="GO" id="GO:0021915">
    <property type="term" value="P:neural tube development"/>
    <property type="evidence" value="ECO:0000303"/>
    <property type="project" value="ComplexPortal"/>
</dbReference>
<dbReference type="GO" id="GO:0090521">
    <property type="term" value="P:podocyte cell migration"/>
    <property type="evidence" value="ECO:0007669"/>
    <property type="project" value="Ensembl"/>
</dbReference>
<dbReference type="GO" id="GO:1902017">
    <property type="term" value="P:regulation of cilium assembly"/>
    <property type="evidence" value="ECO:0000303"/>
    <property type="project" value="ComplexPortal"/>
</dbReference>
<dbReference type="GO" id="GO:0016476">
    <property type="term" value="P:regulation of embryonic cell shape"/>
    <property type="evidence" value="ECO:0000250"/>
    <property type="project" value="UniProtKB"/>
</dbReference>
<dbReference type="GO" id="GO:2000114">
    <property type="term" value="P:regulation of establishment of cell polarity"/>
    <property type="evidence" value="ECO:0007669"/>
    <property type="project" value="Ensembl"/>
</dbReference>
<dbReference type="GO" id="GO:0010762">
    <property type="term" value="P:regulation of fibroblast migration"/>
    <property type="evidence" value="ECO:0007669"/>
    <property type="project" value="Ensembl"/>
</dbReference>
<dbReference type="GO" id="GO:0051893">
    <property type="term" value="P:regulation of focal adhesion assembly"/>
    <property type="evidence" value="ECO:0007669"/>
    <property type="project" value="Ensembl"/>
</dbReference>
<dbReference type="GO" id="GO:0032880">
    <property type="term" value="P:regulation of protein localization"/>
    <property type="evidence" value="ECO:0000250"/>
    <property type="project" value="UniProtKB"/>
</dbReference>
<dbReference type="GO" id="GO:1900027">
    <property type="term" value="P:regulation of ruffle assembly"/>
    <property type="evidence" value="ECO:0007669"/>
    <property type="project" value="Ensembl"/>
</dbReference>
<dbReference type="GO" id="GO:0060541">
    <property type="term" value="P:respiratory system development"/>
    <property type="evidence" value="ECO:0007669"/>
    <property type="project" value="Ensembl"/>
</dbReference>
<dbReference type="GO" id="GO:0060021">
    <property type="term" value="P:roof of mouth development"/>
    <property type="evidence" value="ECO:0000315"/>
    <property type="project" value="GO_Central"/>
</dbReference>
<dbReference type="GO" id="GO:0032185">
    <property type="term" value="P:septin cytoskeleton organization"/>
    <property type="evidence" value="ECO:0000250"/>
    <property type="project" value="UniProtKB"/>
</dbReference>
<dbReference type="GO" id="GO:0007224">
    <property type="term" value="P:smoothened signaling pathway"/>
    <property type="evidence" value="ECO:0007669"/>
    <property type="project" value="Ensembl"/>
</dbReference>
<dbReference type="GO" id="GO:0043587">
    <property type="term" value="P:tongue morphogenesis"/>
    <property type="evidence" value="ECO:0000315"/>
    <property type="project" value="GO_Central"/>
</dbReference>
<dbReference type="Gene3D" id="2.130.10.10">
    <property type="entry name" value="YVTN repeat-like/Quinoprotein amine dehydrogenase"/>
    <property type="match status" value="1"/>
</dbReference>
<dbReference type="InterPro" id="IPR024511">
    <property type="entry name" value="Frtz"/>
</dbReference>
<dbReference type="InterPro" id="IPR015943">
    <property type="entry name" value="WD40/YVTN_repeat-like_dom_sf"/>
</dbReference>
<dbReference type="InterPro" id="IPR036322">
    <property type="entry name" value="WD40_repeat_dom_sf"/>
</dbReference>
<dbReference type="PANTHER" id="PTHR13667">
    <property type="entry name" value="HOMOLOC-13"/>
    <property type="match status" value="1"/>
</dbReference>
<dbReference type="PANTHER" id="PTHR13667:SF5">
    <property type="entry name" value="WD REPEAT-CONTAINING AND PLANAR CELL POLARITY EFFECTOR PROTEIN FRITZ HOMOLOG"/>
    <property type="match status" value="1"/>
</dbReference>
<dbReference type="Pfam" id="PF11768">
    <property type="entry name" value="Frtz"/>
    <property type="match status" value="1"/>
</dbReference>
<dbReference type="SUPFAM" id="SSF50978">
    <property type="entry name" value="WD40 repeat-like"/>
    <property type="match status" value="1"/>
</dbReference>
<name>FRITZ_HUMAN</name>
<protein>
    <recommendedName>
        <fullName>WD repeat-containing and planar cell polarity effector protein fritz homolog</fullName>
        <shortName>hFRTZ</shortName>
    </recommendedName>
    <alternativeName>
        <fullName>Bardet-Biedl syndrome 15 protein</fullName>
    </alternativeName>
    <alternativeName>
        <fullName>WD repeat-containing and planar cell polarity effector protein</fullName>
    </alternativeName>
</protein>
<gene>
    <name type="primary">WDPCP</name>
    <name type="synonym">BBS15</name>
    <name type="synonym">C2orf86</name>
    <name type="synonym">FRITZ</name>
</gene>
<feature type="chain" id="PRO_0000325802" description="WD repeat-containing and planar cell polarity effector protein fritz homolog">
    <location>
        <begin position="1"/>
        <end position="746"/>
    </location>
</feature>
<feature type="repeat" description="WD 1">
    <location>
        <begin position="326"/>
        <end position="374"/>
    </location>
</feature>
<feature type="repeat" description="WD 2">
    <location>
        <begin position="375"/>
        <end position="414"/>
    </location>
</feature>
<feature type="splice variant" id="VSP_032408" description="In isoform 3." evidence="7 9">
    <original>MRREFCWDAYSKAAGSRASSPLPRQDRDSFCHQMSFCLTELHLWSLKNTLHIADRDIGIYQYYDKKDPPATEHGNLEKKQKLAESRDYPWTLKNRRPEKLRDSLKELEELMQNSRCVLSKWKNKYVCQLLFGSGVLVSLSLSGPQLEKVVIDRSLVGKLISDTISD</original>
    <variation>MFSSLHS</variation>
    <location>
        <begin position="1"/>
        <end position="166"/>
    </location>
</feature>
<feature type="splice variant" id="VSP_032409" description="In isoform 2." evidence="8">
    <original>DIHYLALDKGELAL</original>
    <variation>ASCYLTSNYTTRLQ</variation>
    <location>
        <begin position="605"/>
        <end position="618"/>
    </location>
</feature>
<feature type="splice variant" id="VSP_032410" description="In isoform 2." evidence="8">
    <location>
        <begin position="619"/>
        <end position="746"/>
    </location>
</feature>
<feature type="sequence variant" id="VAR_073251" description="In CHDTHP; impairs protein stability; no effect on the assembly of the CPLANE complex; dbSNP:rs200322968." evidence="4 5 6">
    <original>D</original>
    <variation>N</variation>
    <location>
        <position position="54"/>
    </location>
</feature>
<feature type="sequence variant" id="VAR_064770" description="In a patient with Meckel syndrome compound heterozygous for mutations in CC2D2A; no effect on the assembly of the CPLANE complex; dbSNP:rs267606693." evidence="3 6">
    <original>R</original>
    <variation>K</variation>
    <location>
        <position position="55"/>
    </location>
</feature>
<feature type="sequence variant" id="VAR_064771" description="In a patient with Bardet-Biedl syndrome compound heterozygous for mutations in BBS12; no effect on the assembly of the CPLANE complex." evidence="3 6">
    <original>L</original>
    <variation>F</variation>
    <location>
        <position position="205"/>
    </location>
</feature>
<feature type="sequence variant" id="VAR_039919" description="In dbSNP:rs17617459.">
    <original>G</original>
    <variation>S</variation>
    <location>
        <position position="268"/>
    </location>
</feature>
<feature type="sequence variant" id="VAR_064772" description="No effect on the assembly of the CPLANE complex; increased binding to phosphoinositides." evidence="3 6">
    <original>S</original>
    <variation>F</variation>
    <location>
        <position position="708"/>
    </location>
</feature>
<feature type="strand" evidence="12">
    <location>
        <begin position="36"/>
        <end position="43"/>
    </location>
</feature>
<feature type="strand" evidence="12">
    <location>
        <begin position="59"/>
        <end position="61"/>
    </location>
</feature>
<feature type="helix" evidence="12">
    <location>
        <begin position="73"/>
        <end position="85"/>
    </location>
</feature>
<feature type="turn" evidence="12">
    <location>
        <begin position="96"/>
        <end position="98"/>
    </location>
</feature>
<feature type="helix" evidence="12">
    <location>
        <begin position="100"/>
        <end position="113"/>
    </location>
</feature>
<feature type="strand" evidence="12">
    <location>
        <begin position="116"/>
        <end position="123"/>
    </location>
</feature>
<feature type="strand" evidence="12">
    <location>
        <begin position="126"/>
        <end position="131"/>
    </location>
</feature>
<feature type="strand" evidence="12">
    <location>
        <begin position="136"/>
        <end position="142"/>
    </location>
</feature>
<feature type="strand" evidence="12">
    <location>
        <begin position="145"/>
        <end position="152"/>
    </location>
</feature>
<feature type="helix" evidence="12">
    <location>
        <begin position="154"/>
        <end position="157"/>
    </location>
</feature>
<feature type="strand" evidence="12">
    <location>
        <begin position="164"/>
        <end position="169"/>
    </location>
</feature>
<feature type="strand" evidence="12">
    <location>
        <begin position="171"/>
        <end position="180"/>
    </location>
</feature>
<feature type="strand" evidence="12">
    <location>
        <begin position="183"/>
        <end position="190"/>
    </location>
</feature>
<feature type="strand" evidence="12">
    <location>
        <begin position="210"/>
        <end position="216"/>
    </location>
</feature>
<feature type="turn" evidence="12">
    <location>
        <begin position="222"/>
        <end position="224"/>
    </location>
</feature>
<feature type="strand" evidence="12">
    <location>
        <begin position="228"/>
        <end position="231"/>
    </location>
</feature>
<feature type="strand" evidence="12">
    <location>
        <begin position="237"/>
        <end position="241"/>
    </location>
</feature>
<feature type="strand" evidence="12">
    <location>
        <begin position="263"/>
        <end position="270"/>
    </location>
</feature>
<feature type="strand" evidence="12">
    <location>
        <begin position="273"/>
        <end position="280"/>
    </location>
</feature>
<feature type="strand" evidence="12">
    <location>
        <begin position="286"/>
        <end position="291"/>
    </location>
</feature>
<feature type="strand" evidence="12">
    <location>
        <begin position="293"/>
        <end position="295"/>
    </location>
</feature>
<feature type="strand" evidence="12">
    <location>
        <begin position="299"/>
        <end position="306"/>
    </location>
</feature>
<feature type="strand" evidence="12">
    <location>
        <begin position="312"/>
        <end position="315"/>
    </location>
</feature>
<feature type="strand" evidence="12">
    <location>
        <begin position="328"/>
        <end position="330"/>
    </location>
</feature>
<feature type="strand" evidence="12">
    <location>
        <begin position="333"/>
        <end position="335"/>
    </location>
</feature>
<feature type="strand" evidence="12">
    <location>
        <begin position="340"/>
        <end position="345"/>
    </location>
</feature>
<feature type="strand" evidence="12">
    <location>
        <begin position="349"/>
        <end position="356"/>
    </location>
</feature>
<feature type="turn" evidence="12">
    <location>
        <begin position="357"/>
        <end position="359"/>
    </location>
</feature>
<feature type="strand" evidence="12">
    <location>
        <begin position="360"/>
        <end position="365"/>
    </location>
</feature>
<feature type="turn" evidence="12">
    <location>
        <begin position="366"/>
        <end position="369"/>
    </location>
</feature>
<feature type="strand" evidence="12">
    <location>
        <begin position="370"/>
        <end position="375"/>
    </location>
</feature>
<feature type="strand" evidence="12">
    <location>
        <begin position="381"/>
        <end position="385"/>
    </location>
</feature>
<feature type="strand" evidence="12">
    <location>
        <begin position="392"/>
        <end position="395"/>
    </location>
</feature>
<feature type="strand" evidence="12">
    <location>
        <begin position="399"/>
        <end position="404"/>
    </location>
</feature>
<feature type="strand" evidence="12">
    <location>
        <begin position="410"/>
        <end position="415"/>
    </location>
</feature>
<feature type="strand" evidence="12">
    <location>
        <begin position="423"/>
        <end position="427"/>
    </location>
</feature>
<feature type="helix" evidence="12">
    <location>
        <begin position="428"/>
        <end position="430"/>
    </location>
</feature>
<feature type="strand" evidence="12">
    <location>
        <begin position="437"/>
        <end position="443"/>
    </location>
</feature>
<feature type="strand" evidence="12">
    <location>
        <begin position="461"/>
        <end position="467"/>
    </location>
</feature>
<feature type="strand" evidence="12">
    <location>
        <begin position="471"/>
        <end position="476"/>
    </location>
</feature>
<feature type="turn" evidence="12">
    <location>
        <begin position="480"/>
        <end position="484"/>
    </location>
</feature>
<feature type="helix" evidence="12">
    <location>
        <begin position="488"/>
        <end position="497"/>
    </location>
</feature>
<feature type="helix" evidence="12">
    <location>
        <begin position="501"/>
        <end position="510"/>
    </location>
</feature>
<feature type="helix" evidence="12">
    <location>
        <begin position="514"/>
        <end position="516"/>
    </location>
</feature>
<feature type="helix" evidence="12">
    <location>
        <begin position="517"/>
        <end position="532"/>
    </location>
</feature>
<feature type="helix" evidence="12">
    <location>
        <begin position="538"/>
        <end position="552"/>
    </location>
</feature>
<feature type="helix" evidence="12">
    <location>
        <begin position="560"/>
        <end position="582"/>
    </location>
</feature>
<feature type="turn" evidence="12">
    <location>
        <begin position="583"/>
        <end position="585"/>
    </location>
</feature>
<feature type="helix" evidence="12">
    <location>
        <begin position="587"/>
        <end position="597"/>
    </location>
</feature>
<feature type="turn" evidence="12">
    <location>
        <begin position="600"/>
        <end position="603"/>
    </location>
</feature>
<feature type="helix" evidence="12">
    <location>
        <begin position="604"/>
        <end position="611"/>
    </location>
</feature>
<feature type="helix" evidence="12">
    <location>
        <begin position="617"/>
        <end position="627"/>
    </location>
</feature>
<proteinExistence type="evidence at protein level"/>
<comment type="function">
    <text evidence="2 6">Probable effector of the planar cell polarity signaling pathway which regulates the septin cytoskeleton in both ciliogenesis and collective cell movements. Together with FUZ and WDPCP proposed to function as core component of the CPLANE (ciliogenesis and planar polarity effectors) complex involved in the recruitment of peripheral IFT-A proteins to basal bodies (By similarity). Binds phosphatidylinositol 3-phosphate with highest affinity, followed by phosphatidylinositol 4-phosphate and phosphatidylinositol 5-phosphate (PubMed:35427153).</text>
</comment>
<comment type="subunit">
    <text evidence="2 6">Component of the CPLANE (ciliogenesis and planar polarity effectors) complex, composed of INTU, FUZ and WDPCP (PubMed:35427153). Interacts with CPLANE1 (By similarity).</text>
</comment>
<comment type="subcellular location">
    <subcellularLocation>
        <location evidence="1">Cell membrane</location>
    </subcellularLocation>
    <subcellularLocation>
        <location evidence="1">Cytoplasm</location>
        <location evidence="1">Cytoskeleton</location>
        <location evidence="1">Cilium axoneme</location>
    </subcellularLocation>
    <subcellularLocation>
        <location evidence="1">Cytoplasm</location>
        <location evidence="1">Cytoskeleton</location>
        <location evidence="1">Cilium basal body</location>
    </subcellularLocation>
</comment>
<comment type="alternative products">
    <event type="alternative splicing"/>
    <isoform>
        <id>O95876-1</id>
        <name>1</name>
        <sequence type="displayed"/>
    </isoform>
    <isoform>
        <id>O95876-2</id>
        <name>2</name>
        <sequence type="described" ref="VSP_032409 VSP_032410"/>
    </isoform>
    <isoform>
        <id>O95876-3</id>
        <name>3</name>
        <sequence type="described" ref="VSP_032408"/>
    </isoform>
</comment>
<comment type="disease" evidence="3 6">
    <disease id="DI-02938">
        <name>Bardet-Biedl syndrome 15</name>
        <acronym>BBS15</acronym>
        <description>A syndrome characterized by usually severe pigmentary retinopathy, early-onset obesity, polydactyly, hypogenitalism, renal malformation and intellectual disability. Secondary features include diabetes mellitus, hypertension and congenital heart disease. Bardet-Biedl syndrome inheritance is autosomal recessive, but three mutated alleles (two at one locus, and a third at a second locus) may be required for clinical manifestation of some forms of the disease.</description>
        <dbReference type="MIM" id="615992"/>
    </disease>
    <text>The disease is caused by variants affecting the gene represented in this entry.</text>
</comment>
<comment type="disease" evidence="4 5 6">
    <disease id="DI-04320">
        <name>Congenital heart defects, hamartomas of tongue, and polysyndactyly</name>
        <acronym>CHDTHP</acronym>
        <description>A disease characterized by a constellation of anomalies including tongue hamartomas, polysyndactyly, and congenital heart defects such as atrioventricular canal and coarctation of the aorta.</description>
        <dbReference type="MIM" id="217085"/>
    </disease>
    <text>The disease is caused by variants affecting the gene represented in this entry.</text>
</comment>
<comment type="disease">
    <text evidence="3 6">Mutations in WDPCP may act as modifiers of the phenotypic expression of Bardet-Biedl syndrome and Meckel syndrome by interacting in trans with primary BBS and MKS loci.</text>
</comment>
<comment type="similarity">
    <text evidence="10">Belongs to the WD repeat fritz family.</text>
</comment>
<comment type="caution">
    <text evidence="10">It is uncertain whether Met-1 or Met-34 is the initiator.</text>
</comment>
<reference key="1">
    <citation type="submission" date="1999-02" db="EMBL/GenBank/DDBJ databases">
        <authorList>
            <person name="Mei G."/>
            <person name="Yu W."/>
            <person name="Gibbs R.A."/>
        </authorList>
    </citation>
    <scope>NUCLEOTIDE SEQUENCE [LARGE SCALE MRNA] (ISOFORM 3)</scope>
    <source>
        <tissue>Brain</tissue>
    </source>
</reference>
<reference key="2">
    <citation type="journal article" date="2007" name="BMC Genomics">
        <title>The full-ORF clone resource of the German cDNA consortium.</title>
        <authorList>
            <person name="Bechtel S."/>
            <person name="Rosenfelder H."/>
            <person name="Duda A."/>
            <person name="Schmidt C.P."/>
            <person name="Ernst U."/>
            <person name="Wellenreuther R."/>
            <person name="Mehrle A."/>
            <person name="Schuster C."/>
            <person name="Bahr A."/>
            <person name="Bloecker H."/>
            <person name="Heubner D."/>
            <person name="Hoerlein A."/>
            <person name="Michel G."/>
            <person name="Wedler H."/>
            <person name="Koehrer K."/>
            <person name="Ottenwaelder B."/>
            <person name="Poustka A."/>
            <person name="Wiemann S."/>
            <person name="Schupp I."/>
        </authorList>
    </citation>
    <scope>NUCLEOTIDE SEQUENCE [LARGE SCALE MRNA] (ISOFORM 2)</scope>
    <source>
        <tissue>Fetal brain</tissue>
    </source>
</reference>
<reference key="3">
    <citation type="journal article" date="2005" name="Nature">
        <title>Generation and annotation of the DNA sequences of human chromosomes 2 and 4.</title>
        <authorList>
            <person name="Hillier L.W."/>
            <person name="Graves T.A."/>
            <person name="Fulton R.S."/>
            <person name="Fulton L.A."/>
            <person name="Pepin K.H."/>
            <person name="Minx P."/>
            <person name="Wagner-McPherson C."/>
            <person name="Layman D."/>
            <person name="Wylie K."/>
            <person name="Sekhon M."/>
            <person name="Becker M.C."/>
            <person name="Fewell G.A."/>
            <person name="Delehaunty K.D."/>
            <person name="Miner T.L."/>
            <person name="Nash W.E."/>
            <person name="Kremitzki C."/>
            <person name="Oddy L."/>
            <person name="Du H."/>
            <person name="Sun H."/>
            <person name="Bradshaw-Cordum H."/>
            <person name="Ali J."/>
            <person name="Carter J."/>
            <person name="Cordes M."/>
            <person name="Harris A."/>
            <person name="Isak A."/>
            <person name="van Brunt A."/>
            <person name="Nguyen C."/>
            <person name="Du F."/>
            <person name="Courtney L."/>
            <person name="Kalicki J."/>
            <person name="Ozersky P."/>
            <person name="Abbott S."/>
            <person name="Armstrong J."/>
            <person name="Belter E.A."/>
            <person name="Caruso L."/>
            <person name="Cedroni M."/>
            <person name="Cotton M."/>
            <person name="Davidson T."/>
            <person name="Desai A."/>
            <person name="Elliott G."/>
            <person name="Erb T."/>
            <person name="Fronick C."/>
            <person name="Gaige T."/>
            <person name="Haakenson W."/>
            <person name="Haglund K."/>
            <person name="Holmes A."/>
            <person name="Harkins R."/>
            <person name="Kim K."/>
            <person name="Kruchowski S.S."/>
            <person name="Strong C.M."/>
            <person name="Grewal N."/>
            <person name="Goyea E."/>
            <person name="Hou S."/>
            <person name="Levy A."/>
            <person name="Martinka S."/>
            <person name="Mead K."/>
            <person name="McLellan M.D."/>
            <person name="Meyer R."/>
            <person name="Randall-Maher J."/>
            <person name="Tomlinson C."/>
            <person name="Dauphin-Kohlberg S."/>
            <person name="Kozlowicz-Reilly A."/>
            <person name="Shah N."/>
            <person name="Swearengen-Shahid S."/>
            <person name="Snider J."/>
            <person name="Strong J.T."/>
            <person name="Thompson J."/>
            <person name="Yoakum M."/>
            <person name="Leonard S."/>
            <person name="Pearman C."/>
            <person name="Trani L."/>
            <person name="Radionenko M."/>
            <person name="Waligorski J.E."/>
            <person name="Wang C."/>
            <person name="Rock S.M."/>
            <person name="Tin-Wollam A.-M."/>
            <person name="Maupin R."/>
            <person name="Latreille P."/>
            <person name="Wendl M.C."/>
            <person name="Yang S.-P."/>
            <person name="Pohl C."/>
            <person name="Wallis J.W."/>
            <person name="Spieth J."/>
            <person name="Bieri T.A."/>
            <person name="Berkowicz N."/>
            <person name="Nelson J.O."/>
            <person name="Osborne J."/>
            <person name="Ding L."/>
            <person name="Meyer R."/>
            <person name="Sabo A."/>
            <person name="Shotland Y."/>
            <person name="Sinha P."/>
            <person name="Wohldmann P.E."/>
            <person name="Cook L.L."/>
            <person name="Hickenbotham M.T."/>
            <person name="Eldred J."/>
            <person name="Williams D."/>
            <person name="Jones T.A."/>
            <person name="She X."/>
            <person name="Ciccarelli F.D."/>
            <person name="Izaurralde E."/>
            <person name="Taylor J."/>
            <person name="Schmutz J."/>
            <person name="Myers R.M."/>
            <person name="Cox D.R."/>
            <person name="Huang X."/>
            <person name="McPherson J.D."/>
            <person name="Mardis E.R."/>
            <person name="Clifton S.W."/>
            <person name="Warren W.C."/>
            <person name="Chinwalla A.T."/>
            <person name="Eddy S.R."/>
            <person name="Marra M.A."/>
            <person name="Ovcharenko I."/>
            <person name="Furey T.S."/>
            <person name="Miller W."/>
            <person name="Eichler E.E."/>
            <person name="Bork P."/>
            <person name="Suyama M."/>
            <person name="Torrents D."/>
            <person name="Waterston R.H."/>
            <person name="Wilson R.K."/>
        </authorList>
    </citation>
    <scope>NUCLEOTIDE SEQUENCE [LARGE SCALE GENOMIC DNA]</scope>
</reference>
<reference key="4">
    <citation type="journal article" date="2004" name="Genome Res.">
        <title>The status, quality, and expansion of the NIH full-length cDNA project: the Mammalian Gene Collection (MGC).</title>
        <authorList>
            <consortium name="The MGC Project Team"/>
        </authorList>
    </citation>
    <scope>NUCLEOTIDE SEQUENCE [LARGE SCALE MRNA] (ISOFORM 3)</scope>
    <source>
        <tissue>Brain</tissue>
    </source>
</reference>
<reference evidence="11" key="5">
    <citation type="journal article" date="2022" name="Sci. Adv.">
        <title>Structure of the ciliogenesis-associated CPLANE complex.</title>
        <authorList>
            <person name="Langousis G."/>
            <person name="Cavadini S."/>
            <person name="Boegholm N."/>
            <person name="Lorentzen E."/>
            <person name="Kempf G."/>
            <person name="Matthias P."/>
        </authorList>
    </citation>
    <scope>STRUCTURE BY ELECTRON MICROSCOPY (3.35 ANGSTROMS) OF 2-746</scope>
    <scope>IDENTIFICATION IN THE CPLANE COMPLEX</scope>
    <scope>FUNCTION</scope>
    <scope>CHARACTERIZATION OF VARIANT CHDTHP ASN-54</scope>
    <scope>CHARACTERIZATION OF VARIANTS LYS-55; PHE-205 AND PHE-708</scope>
</reference>
<reference key="6">
    <citation type="journal article" date="2010" name="Science">
        <title>Planar cell polarity acts through septins to control collective cell movement and ciliogenesis.</title>
        <authorList>
            <person name="Kim S.K."/>
            <person name="Shindo A."/>
            <person name="Park T.J."/>
            <person name="Oh E.C."/>
            <person name="Ghosh S."/>
            <person name="Gray R.S."/>
            <person name="Lewis R.A."/>
            <person name="Johnson C.A."/>
            <person name="Attie-Bittach T."/>
            <person name="Katsanis N."/>
            <person name="Wallingford J.B."/>
        </authorList>
    </citation>
    <scope>INVOLVEMENT IN BBS15</scope>
    <scope>INVOLVEMENT IN MECKEL SYNDROME</scope>
    <scope>VARIANTS LYS-55; PHE-205 AND PHE-708</scope>
</reference>
<reference key="7">
    <citation type="journal article" date="2015" name="Am. J. Med. Genet. A">
        <title>Compound heterozygosity for a frame shift mutation and a likely pathogenic sequence variant in the planar cell polarity-ciliogenesis gene WDPCP in a girl with polysyndactyly, coarctation of the aorta, and tongue hamartomas.</title>
        <authorList>
            <person name="Saari J."/>
            <person name="Lovell M.A."/>
            <person name="Yu H.C."/>
            <person name="Bellus G.A."/>
        </authorList>
    </citation>
    <scope>INVOLVEMENT IN CHDTHP</scope>
    <scope>VARIANT CHDTHP ASN-54</scope>
</reference>
<reference key="8">
    <citation type="journal article" date="2016" name="Nat. Genet.">
        <title>The ciliopathy-associated CPLANE proteins direct basal body recruitment of intraflagellar transport machinery.</title>
        <authorList>
            <person name="Toriyama M."/>
            <person name="Lee C."/>
            <person name="Taylor S.P."/>
            <person name="Duran I."/>
            <person name="Cohn D.H."/>
            <person name="Bruel A.L."/>
            <person name="Tabler J.M."/>
            <person name="Drew K."/>
            <person name="Kelly M.R."/>
            <person name="Kim S."/>
            <person name="Park T.J."/>
            <person name="Braun D.A."/>
            <person name="Pierquin G."/>
            <person name="Biver A."/>
            <person name="Wagner K."/>
            <person name="Malfroot A."/>
            <person name="Panigrahi I."/>
            <person name="Franco B."/>
            <person name="Al-Lami H.A."/>
            <person name="Yeung Y."/>
            <person name="Choi Y.J."/>
            <person name="Duffourd Y."/>
            <person name="Faivre L."/>
            <person name="Riviere J.B."/>
            <person name="Chen J."/>
            <person name="Liu K.J."/>
            <person name="Marcotte E.M."/>
            <person name="Hildebrandt F."/>
            <person name="Thauvin-Robinet C."/>
            <person name="Krakow D."/>
            <person name="Jackson P.K."/>
            <person name="Wallingford J.B."/>
        </authorList>
    </citation>
    <scope>VARIANT CHDTHP ASN-54</scope>
    <scope>CHARACTERIZATION OF VARIANT CHDTHP ASN-54</scope>
</reference>
<evidence type="ECO:0000250" key="1">
    <source>
        <dbReference type="UniProtKB" id="Q32NR9"/>
    </source>
</evidence>
<evidence type="ECO:0000250" key="2">
    <source>
        <dbReference type="UniProtKB" id="Q8C456"/>
    </source>
</evidence>
<evidence type="ECO:0000269" key="3">
    <source>
    </source>
</evidence>
<evidence type="ECO:0000269" key="4">
    <source>
    </source>
</evidence>
<evidence type="ECO:0000269" key="5">
    <source>
    </source>
</evidence>
<evidence type="ECO:0000269" key="6">
    <source>
    </source>
</evidence>
<evidence type="ECO:0000303" key="7">
    <source>
    </source>
</evidence>
<evidence type="ECO:0000303" key="8">
    <source>
    </source>
</evidence>
<evidence type="ECO:0000303" key="9">
    <source ref="1"/>
</evidence>
<evidence type="ECO:0000305" key="10"/>
<evidence type="ECO:0007744" key="11">
    <source>
        <dbReference type="PDB" id="7Q3D"/>
    </source>
</evidence>
<evidence type="ECO:0007829" key="12">
    <source>
        <dbReference type="PDB" id="7Q3D"/>
    </source>
</evidence>
<accession>O95876</accession>
<accession>Q53RW4</accession>
<accession>Q7Z2Z3</accession>
<organism>
    <name type="scientific">Homo sapiens</name>
    <name type="common">Human</name>
    <dbReference type="NCBI Taxonomy" id="9606"/>
    <lineage>
        <taxon>Eukaryota</taxon>
        <taxon>Metazoa</taxon>
        <taxon>Chordata</taxon>
        <taxon>Craniata</taxon>
        <taxon>Vertebrata</taxon>
        <taxon>Euteleostomi</taxon>
        <taxon>Mammalia</taxon>
        <taxon>Eutheria</taxon>
        <taxon>Euarchontoglires</taxon>
        <taxon>Primates</taxon>
        <taxon>Haplorrhini</taxon>
        <taxon>Catarrhini</taxon>
        <taxon>Hominidae</taxon>
        <taxon>Homo</taxon>
    </lineage>
</organism>